<dbReference type="EC" id="2.1.1.199" evidence="1"/>
<dbReference type="EMBL" id="CP001048">
    <property type="protein sequence ID" value="ACC87691.1"/>
    <property type="molecule type" value="Genomic_DNA"/>
</dbReference>
<dbReference type="RefSeq" id="WP_002210442.1">
    <property type="nucleotide sequence ID" value="NZ_CP009780.1"/>
</dbReference>
<dbReference type="SMR" id="B2K4D8"/>
<dbReference type="GeneID" id="57974068"/>
<dbReference type="KEGG" id="ypb:YPTS_0707"/>
<dbReference type="PATRIC" id="fig|502801.10.peg.38"/>
<dbReference type="GO" id="GO:0005737">
    <property type="term" value="C:cytoplasm"/>
    <property type="evidence" value="ECO:0007669"/>
    <property type="project" value="UniProtKB-SubCell"/>
</dbReference>
<dbReference type="GO" id="GO:0071424">
    <property type="term" value="F:rRNA (cytosine-N4-)-methyltransferase activity"/>
    <property type="evidence" value="ECO:0007669"/>
    <property type="project" value="UniProtKB-UniRule"/>
</dbReference>
<dbReference type="GO" id="GO:0070475">
    <property type="term" value="P:rRNA base methylation"/>
    <property type="evidence" value="ECO:0007669"/>
    <property type="project" value="UniProtKB-UniRule"/>
</dbReference>
<dbReference type="FunFam" id="1.10.150.170:FF:000001">
    <property type="entry name" value="Ribosomal RNA small subunit methyltransferase H"/>
    <property type="match status" value="1"/>
</dbReference>
<dbReference type="Gene3D" id="1.10.150.170">
    <property type="entry name" value="Putative methyltransferase TM0872, insert domain"/>
    <property type="match status" value="1"/>
</dbReference>
<dbReference type="Gene3D" id="3.40.50.150">
    <property type="entry name" value="Vaccinia Virus protein VP39"/>
    <property type="match status" value="1"/>
</dbReference>
<dbReference type="HAMAP" id="MF_01007">
    <property type="entry name" value="16SrRNA_methyltr_H"/>
    <property type="match status" value="1"/>
</dbReference>
<dbReference type="InterPro" id="IPR002903">
    <property type="entry name" value="RsmH"/>
</dbReference>
<dbReference type="InterPro" id="IPR023397">
    <property type="entry name" value="SAM-dep_MeTrfase_MraW_recog"/>
</dbReference>
<dbReference type="InterPro" id="IPR029063">
    <property type="entry name" value="SAM-dependent_MTases_sf"/>
</dbReference>
<dbReference type="NCBIfam" id="TIGR00006">
    <property type="entry name" value="16S rRNA (cytosine(1402)-N(4))-methyltransferase RsmH"/>
    <property type="match status" value="1"/>
</dbReference>
<dbReference type="PANTHER" id="PTHR11265:SF0">
    <property type="entry name" value="12S RRNA N4-METHYLCYTIDINE METHYLTRANSFERASE"/>
    <property type="match status" value="1"/>
</dbReference>
<dbReference type="PANTHER" id="PTHR11265">
    <property type="entry name" value="S-ADENOSYL-METHYLTRANSFERASE MRAW"/>
    <property type="match status" value="1"/>
</dbReference>
<dbReference type="Pfam" id="PF01795">
    <property type="entry name" value="Methyltransf_5"/>
    <property type="match status" value="1"/>
</dbReference>
<dbReference type="PIRSF" id="PIRSF004486">
    <property type="entry name" value="MraW"/>
    <property type="match status" value="1"/>
</dbReference>
<dbReference type="SUPFAM" id="SSF81799">
    <property type="entry name" value="Putative methyltransferase TM0872, insert domain"/>
    <property type="match status" value="1"/>
</dbReference>
<dbReference type="SUPFAM" id="SSF53335">
    <property type="entry name" value="S-adenosyl-L-methionine-dependent methyltransferases"/>
    <property type="match status" value="1"/>
</dbReference>
<evidence type="ECO:0000255" key="1">
    <source>
        <dbReference type="HAMAP-Rule" id="MF_01007"/>
    </source>
</evidence>
<accession>B2K4D8</accession>
<sequence>MVDNNKTVDNNYKHTSVLLDEAVKGLNIRDNGIYIDGTFGRGGHSRLILSQLGPEGRLIAIDRDPEAIEAAKQITDPRFSIVHGPFSDLAHYVRDLDLVGRIDGILLDLGVSSPQLDDAERGFSFMRDGPLDMRMDPSRGLSAAEWLMKASADDIAWVLKTFGEERFAKRLAKAIVERNLTQPMTRTKELADLIANASPFRDKHKHPATRSFQAIRIYINSELEEIERALDGAHEVLAPEGRLSVISFHSLEDRIVKNFIRHHSRGPQVPAGLPLTEAQLRSMGGRTLKSVGKMMPGDAEIAENPRARSSVLRFAERIGE</sequence>
<reference key="1">
    <citation type="submission" date="2008-04" db="EMBL/GenBank/DDBJ databases">
        <title>Complete sequence of Yersinia pseudotuberculosis PB1/+.</title>
        <authorList>
            <person name="Copeland A."/>
            <person name="Lucas S."/>
            <person name="Lapidus A."/>
            <person name="Glavina del Rio T."/>
            <person name="Dalin E."/>
            <person name="Tice H."/>
            <person name="Bruce D."/>
            <person name="Goodwin L."/>
            <person name="Pitluck S."/>
            <person name="Munk A.C."/>
            <person name="Brettin T."/>
            <person name="Detter J.C."/>
            <person name="Han C."/>
            <person name="Tapia R."/>
            <person name="Schmutz J."/>
            <person name="Larimer F."/>
            <person name="Land M."/>
            <person name="Hauser L."/>
            <person name="Challacombe J.F."/>
            <person name="Green L."/>
            <person name="Lindler L.E."/>
            <person name="Nikolich M.P."/>
            <person name="Richardson P."/>
        </authorList>
    </citation>
    <scope>NUCLEOTIDE SEQUENCE [LARGE SCALE GENOMIC DNA]</scope>
    <source>
        <strain>PB1/+</strain>
    </source>
</reference>
<organism>
    <name type="scientific">Yersinia pseudotuberculosis serotype IB (strain PB1/+)</name>
    <dbReference type="NCBI Taxonomy" id="502801"/>
    <lineage>
        <taxon>Bacteria</taxon>
        <taxon>Pseudomonadati</taxon>
        <taxon>Pseudomonadota</taxon>
        <taxon>Gammaproteobacteria</taxon>
        <taxon>Enterobacterales</taxon>
        <taxon>Yersiniaceae</taxon>
        <taxon>Yersinia</taxon>
    </lineage>
</organism>
<protein>
    <recommendedName>
        <fullName evidence="1">Ribosomal RNA small subunit methyltransferase H</fullName>
        <ecNumber evidence="1">2.1.1.199</ecNumber>
    </recommendedName>
    <alternativeName>
        <fullName evidence="1">16S rRNA m(4)C1402 methyltransferase</fullName>
    </alternativeName>
    <alternativeName>
        <fullName evidence="1">rRNA (cytosine-N(4)-)-methyltransferase RsmH</fullName>
    </alternativeName>
</protein>
<comment type="function">
    <text evidence="1">Specifically methylates the N4 position of cytidine in position 1402 (C1402) of 16S rRNA.</text>
</comment>
<comment type="catalytic activity">
    <reaction evidence="1">
        <text>cytidine(1402) in 16S rRNA + S-adenosyl-L-methionine = N(4)-methylcytidine(1402) in 16S rRNA + S-adenosyl-L-homocysteine + H(+)</text>
        <dbReference type="Rhea" id="RHEA:42928"/>
        <dbReference type="Rhea" id="RHEA-COMP:10286"/>
        <dbReference type="Rhea" id="RHEA-COMP:10287"/>
        <dbReference type="ChEBI" id="CHEBI:15378"/>
        <dbReference type="ChEBI" id="CHEBI:57856"/>
        <dbReference type="ChEBI" id="CHEBI:59789"/>
        <dbReference type="ChEBI" id="CHEBI:74506"/>
        <dbReference type="ChEBI" id="CHEBI:82748"/>
        <dbReference type="EC" id="2.1.1.199"/>
    </reaction>
</comment>
<comment type="subcellular location">
    <subcellularLocation>
        <location evidence="1">Cytoplasm</location>
    </subcellularLocation>
</comment>
<comment type="similarity">
    <text evidence="1">Belongs to the methyltransferase superfamily. RsmH family.</text>
</comment>
<keyword id="KW-0963">Cytoplasm</keyword>
<keyword id="KW-0489">Methyltransferase</keyword>
<keyword id="KW-0698">rRNA processing</keyword>
<keyword id="KW-0949">S-adenosyl-L-methionine</keyword>
<keyword id="KW-0808">Transferase</keyword>
<name>RSMH_YERPB</name>
<proteinExistence type="inferred from homology"/>
<gene>
    <name evidence="1" type="primary">rsmH</name>
    <name type="synonym">mraW</name>
    <name type="ordered locus">YPTS_0707</name>
</gene>
<feature type="chain" id="PRO_0000387223" description="Ribosomal RNA small subunit methyltransferase H">
    <location>
        <begin position="1"/>
        <end position="320"/>
    </location>
</feature>
<feature type="binding site" evidence="1">
    <location>
        <begin position="42"/>
        <end position="44"/>
    </location>
    <ligand>
        <name>S-adenosyl-L-methionine</name>
        <dbReference type="ChEBI" id="CHEBI:59789"/>
    </ligand>
</feature>
<feature type="binding site" evidence="1">
    <location>
        <position position="62"/>
    </location>
    <ligand>
        <name>S-adenosyl-L-methionine</name>
        <dbReference type="ChEBI" id="CHEBI:59789"/>
    </ligand>
</feature>
<feature type="binding site" evidence="1">
    <location>
        <position position="86"/>
    </location>
    <ligand>
        <name>S-adenosyl-L-methionine</name>
        <dbReference type="ChEBI" id="CHEBI:59789"/>
    </ligand>
</feature>
<feature type="binding site" evidence="1">
    <location>
        <position position="108"/>
    </location>
    <ligand>
        <name>S-adenosyl-L-methionine</name>
        <dbReference type="ChEBI" id="CHEBI:59789"/>
    </ligand>
</feature>
<feature type="binding site" evidence="1">
    <location>
        <position position="115"/>
    </location>
    <ligand>
        <name>S-adenosyl-L-methionine</name>
        <dbReference type="ChEBI" id="CHEBI:59789"/>
    </ligand>
</feature>